<accession>Q95KI4</accession>
<name>MOAP1_MACFA</name>
<proteinExistence type="evidence at transcript level"/>
<gene>
    <name evidence="1" type="primary">MOAP1</name>
    <name evidence="3" type="ORF">QtrA-11392</name>
</gene>
<reference key="1">
    <citation type="submission" date="2001-04" db="EMBL/GenBank/DDBJ databases">
        <title>Isolation of full-length cDNA clones from macaque brain cDNA libraries.</title>
        <authorList>
            <person name="Osada N."/>
            <person name="Hida M."/>
            <person name="Kusuda J."/>
            <person name="Tanuma R."/>
            <person name="Iseki K."/>
            <person name="Hirai M."/>
            <person name="Terao K."/>
            <person name="Suzuki Y."/>
            <person name="Sugano S."/>
            <person name="Hashimoto K."/>
        </authorList>
    </citation>
    <scope>NUCLEOTIDE SEQUENCE [LARGE SCALE MRNA]</scope>
    <source>
        <tissue>Temporal cortex</tissue>
    </source>
</reference>
<comment type="function">
    <text evidence="1 2">Retrotransposon-derived protein that forms virion-like capsids (By similarity). Acts as an effector of BAX during apoptosis: enriched at outer mitochondria membrane and associates with BAX upon induction of apoptosis, facilitating BAX-dependent mitochondrial outer membrane permeabilization and apoptosis. Required for death receptor-dependent apoptosis. When associated with RASSF1, promotes BAX conformational change and translocation to mitochondrial membranes in response to TNF and TNFSF10 stimulation. Also promotes autophagy: promotes phagophore closure via association with ATG8 proteins. Acts as an inhibitor of the NFE2L2/NRF2 pathway via interaction with SQSTM1: interaction promotes dissociation of SQSTM1 inclusion bodies that sequester KEAP1, relieving inactivation of the BCR(KEAP1) complex (By similarity).</text>
</comment>
<comment type="subunit">
    <text evidence="1 2">Homodimer. Under normal circumstances, held in an inactive conformation by an intramolecular interaction. Interacts with BAX. Binding to RASSF1 isoform A (RASSF1A) relieves this inhibitory interaction and allows further binding to BAX. Also binds to BCL2 and BCLX. Recruited to the TNFRSF1A and TNFRSF10A complexes in response to their respective cognate ligand, after internalization. Interacts with TRIM39 (By similarity). Interacts with RASSF6 (By similarity). Interacts with ATG8 proteins MAP1LC3A, MAP1LC3B and MAP1LC3C. Does not interact with ATG8 proteins GABARAPL1, GABARAPL2 and GABARAP. Interacts with SQSTM1; promoting dissociation of SQSTM1 inclusion bodies that sequester KEAP1 (By similarity).</text>
</comment>
<comment type="subcellular location">
    <subcellularLocation>
        <location evidence="1">Cytoplasm</location>
        <location evidence="1">Cytosol</location>
    </subcellularLocation>
    <subcellularLocation>
        <location evidence="1">Mitochondrion outer membrane</location>
    </subcellularLocation>
    <subcellularLocation>
        <location evidence="2">Extracellular vesicle membrane</location>
    </subcellularLocation>
    <text evidence="2">Forms virion-like extracellular vesicles that are released from cells.</text>
</comment>
<comment type="domain">
    <text evidence="1">The protein is evolutionarily related to retrotransposon Gag proteins: it contains the capsid (CA)subdomain of gag.</text>
</comment>
<comment type="domain">
    <text evidence="1">The BH3-like domain is required for association with BAX and for mediating apoptosis. The three BH domains (BH1, BH2, and BH3) of BAX are all required for mediating protein-protein interaction.</text>
</comment>
<comment type="domain">
    <text evidence="1">The LIR motif (LC3-interacting region) is required for the interaction with the ATG8 family proteins MAP1LC3A, MAP1LC3B and MAP1LC3C.</text>
</comment>
<comment type="PTM">
    <text evidence="1">Ubiquitinated and degraded during mitotic exit by APC/C-Cdh1, this modification is inhibited by TRIM39.</text>
</comment>
<comment type="similarity">
    <text evidence="4">Belongs to the PNMA family.</text>
</comment>
<evidence type="ECO:0000250" key="1">
    <source>
        <dbReference type="UniProtKB" id="Q96BY2"/>
    </source>
</evidence>
<evidence type="ECO:0000250" key="2">
    <source>
        <dbReference type="UniProtKB" id="Q9ERH6"/>
    </source>
</evidence>
<evidence type="ECO:0000303" key="3">
    <source ref="1"/>
</evidence>
<evidence type="ECO:0000305" key="4"/>
<keyword id="KW-0053">Apoptosis</keyword>
<keyword id="KW-0072">Autophagy</keyword>
<keyword id="KW-0963">Cytoplasm</keyword>
<keyword id="KW-0472">Membrane</keyword>
<keyword id="KW-0496">Mitochondrion</keyword>
<keyword id="KW-1000">Mitochondrion outer membrane</keyword>
<keyword id="KW-1185">Reference proteome</keyword>
<keyword id="KW-0832">Ubl conjugation</keyword>
<sequence>MTLRLLEDWCRGMDMNPRKALLIAGISQSCSVAEIEEALQAGLAPLGEYRLLGRMFRRDENRKVALVGLTAETSHALVPKEIPGKGGIWRVIFKPPDSDNTFLSRLNEFLAGEGMTVGELTRALAHENGSLDLEQGMIPEMWAPMLAQALEALQPALQCLKYKKLRVFSGREPPEPGEEEFGRWMFHTTQMIKAWQVPDVEKRRRLLESLRGPALDVIRVLKINNPLITVDECLQALEEVFGVTDNPRELQVKYLTTYQKDEEKLSAYVLRLEPLLQKLVQRGAIERDAVNQARLDQVIAGAVHKTIRRELNLPEDGPAPGFLQLLVLIKDYEAAEEEEALLQEVLEGHFT</sequence>
<feature type="chain" id="PRO_0000155206" description="Modulator of apoptosis 1">
    <location>
        <begin position="1"/>
        <end position="351"/>
    </location>
</feature>
<feature type="region of interest" description="BH3-like" evidence="1">
    <location>
        <begin position="120"/>
        <end position="127"/>
    </location>
</feature>
<feature type="region of interest" description="RASSF1-binding" evidence="1">
    <location>
        <begin position="202"/>
        <end position="205"/>
    </location>
</feature>
<feature type="short sequence motif" description="LIR" evidence="1">
    <location>
        <begin position="49"/>
        <end position="52"/>
    </location>
</feature>
<protein>
    <recommendedName>
        <fullName evidence="1">Modulator of apoptosis 1</fullName>
        <shortName evidence="1">MAP-1</shortName>
    </recommendedName>
</protein>
<dbReference type="EMBL" id="AB060854">
    <property type="protein sequence ID" value="BAB46873.1"/>
    <property type="molecule type" value="mRNA"/>
</dbReference>
<dbReference type="RefSeq" id="NP_001274595.1">
    <property type="nucleotide sequence ID" value="NM_001287666.1"/>
</dbReference>
<dbReference type="RefSeq" id="XP_045252837.1">
    <property type="nucleotide sequence ID" value="XM_045396902.2"/>
</dbReference>
<dbReference type="SMR" id="Q95KI4"/>
<dbReference type="STRING" id="9541.ENSMFAP00000001813"/>
<dbReference type="Ensembl" id="ENSMFAT00000073431.1">
    <property type="protein sequence ID" value="ENSMFAP00000050942.1"/>
    <property type="gene ID" value="ENSMFAG00000050773.1"/>
</dbReference>
<dbReference type="GeneID" id="102133169"/>
<dbReference type="VEuPathDB" id="HostDB:ENSMFAG00000038233"/>
<dbReference type="eggNOG" id="ENOG502SAVD">
    <property type="taxonomic scope" value="Eukaryota"/>
</dbReference>
<dbReference type="GeneTree" id="ENSGT01030000234522"/>
<dbReference type="OMA" id="HAFRRTE"/>
<dbReference type="Proteomes" id="UP000233100">
    <property type="component" value="Chromosome 7"/>
</dbReference>
<dbReference type="GO" id="GO:0005829">
    <property type="term" value="C:cytosol"/>
    <property type="evidence" value="ECO:0007669"/>
    <property type="project" value="UniProtKB-SubCell"/>
</dbReference>
<dbReference type="GO" id="GO:0005741">
    <property type="term" value="C:mitochondrial outer membrane"/>
    <property type="evidence" value="ECO:0007669"/>
    <property type="project" value="UniProtKB-SubCell"/>
</dbReference>
<dbReference type="GO" id="GO:0031625">
    <property type="term" value="F:ubiquitin protein ligase binding"/>
    <property type="evidence" value="ECO:0007669"/>
    <property type="project" value="Ensembl"/>
</dbReference>
<dbReference type="GO" id="GO:0006914">
    <property type="term" value="P:autophagy"/>
    <property type="evidence" value="ECO:0007669"/>
    <property type="project" value="UniProtKB-KW"/>
</dbReference>
<dbReference type="GO" id="GO:0097192">
    <property type="term" value="P:extrinsic apoptotic signaling pathway in absence of ligand"/>
    <property type="evidence" value="ECO:0007669"/>
    <property type="project" value="Ensembl"/>
</dbReference>
<dbReference type="GO" id="GO:0008625">
    <property type="term" value="P:extrinsic apoptotic signaling pathway via death domain receptors"/>
    <property type="evidence" value="ECO:0007669"/>
    <property type="project" value="Ensembl"/>
</dbReference>
<dbReference type="GO" id="GO:0008630">
    <property type="term" value="P:intrinsic apoptotic signaling pathway in response to DNA damage"/>
    <property type="evidence" value="ECO:0007669"/>
    <property type="project" value="Ensembl"/>
</dbReference>
<dbReference type="GO" id="GO:0043065">
    <property type="term" value="P:positive regulation of apoptotic process"/>
    <property type="evidence" value="ECO:0007669"/>
    <property type="project" value="Ensembl"/>
</dbReference>
<dbReference type="GO" id="GO:2000786">
    <property type="term" value="P:positive regulation of autophagosome assembly"/>
    <property type="evidence" value="ECO:0000250"/>
    <property type="project" value="UniProtKB"/>
</dbReference>
<dbReference type="GO" id="GO:0090200">
    <property type="term" value="P:positive regulation of release of cytochrome c from mitochondria"/>
    <property type="evidence" value="ECO:0007669"/>
    <property type="project" value="Ensembl"/>
</dbReference>
<dbReference type="GO" id="GO:0051204">
    <property type="term" value="P:protein insertion into mitochondrial membrane"/>
    <property type="evidence" value="ECO:0007669"/>
    <property type="project" value="Ensembl"/>
</dbReference>
<dbReference type="InterPro" id="IPR026523">
    <property type="entry name" value="PNMA"/>
</dbReference>
<dbReference type="InterPro" id="IPR048270">
    <property type="entry name" value="PNMA_C"/>
</dbReference>
<dbReference type="InterPro" id="IPR048271">
    <property type="entry name" value="PNMA_N"/>
</dbReference>
<dbReference type="PANTHER" id="PTHR23095:SF14">
    <property type="entry name" value="MODULATOR OF APOPTOSIS 1"/>
    <property type="match status" value="1"/>
</dbReference>
<dbReference type="PANTHER" id="PTHR23095">
    <property type="entry name" value="PARANEOPLASTIC ANTIGEN"/>
    <property type="match status" value="1"/>
</dbReference>
<dbReference type="Pfam" id="PF14893">
    <property type="entry name" value="PNMA"/>
    <property type="match status" value="1"/>
</dbReference>
<dbReference type="Pfam" id="PF20846">
    <property type="entry name" value="PNMA_N"/>
    <property type="match status" value="1"/>
</dbReference>
<organism>
    <name type="scientific">Macaca fascicularis</name>
    <name type="common">Crab-eating macaque</name>
    <name type="synonym">Cynomolgus monkey</name>
    <dbReference type="NCBI Taxonomy" id="9541"/>
    <lineage>
        <taxon>Eukaryota</taxon>
        <taxon>Metazoa</taxon>
        <taxon>Chordata</taxon>
        <taxon>Craniata</taxon>
        <taxon>Vertebrata</taxon>
        <taxon>Euteleostomi</taxon>
        <taxon>Mammalia</taxon>
        <taxon>Eutheria</taxon>
        <taxon>Euarchontoglires</taxon>
        <taxon>Primates</taxon>
        <taxon>Haplorrhini</taxon>
        <taxon>Catarrhini</taxon>
        <taxon>Cercopithecidae</taxon>
        <taxon>Cercopithecinae</taxon>
        <taxon>Macaca</taxon>
    </lineage>
</organism>